<accession>A4JGV5</accession>
<protein>
    <recommendedName>
        <fullName evidence="1">Phosphoenolpyruvate carboxylase</fullName>
        <shortName evidence="1">PEPC</shortName>
        <shortName evidence="1">PEPCase</shortName>
        <ecNumber evidence="1">4.1.1.31</ecNumber>
    </recommendedName>
</protein>
<evidence type="ECO:0000255" key="1">
    <source>
        <dbReference type="HAMAP-Rule" id="MF_00595"/>
    </source>
</evidence>
<evidence type="ECO:0000256" key="2">
    <source>
        <dbReference type="SAM" id="MobiDB-lite"/>
    </source>
</evidence>
<reference key="1">
    <citation type="submission" date="2007-03" db="EMBL/GenBank/DDBJ databases">
        <title>Complete sequence of chromosome 1 of Burkholderia vietnamiensis G4.</title>
        <authorList>
            <consortium name="US DOE Joint Genome Institute"/>
            <person name="Copeland A."/>
            <person name="Lucas S."/>
            <person name="Lapidus A."/>
            <person name="Barry K."/>
            <person name="Detter J.C."/>
            <person name="Glavina del Rio T."/>
            <person name="Hammon N."/>
            <person name="Israni S."/>
            <person name="Dalin E."/>
            <person name="Tice H."/>
            <person name="Pitluck S."/>
            <person name="Chain P."/>
            <person name="Malfatti S."/>
            <person name="Shin M."/>
            <person name="Vergez L."/>
            <person name="Schmutz J."/>
            <person name="Larimer F."/>
            <person name="Land M."/>
            <person name="Hauser L."/>
            <person name="Kyrpides N."/>
            <person name="Tiedje J."/>
            <person name="Richardson P."/>
        </authorList>
    </citation>
    <scope>NUCLEOTIDE SEQUENCE [LARGE SCALE GENOMIC DNA]</scope>
    <source>
        <strain>G4 / LMG 22486</strain>
    </source>
</reference>
<feature type="chain" id="PRO_1000025553" description="Phosphoenolpyruvate carboxylase">
    <location>
        <begin position="1"/>
        <end position="997"/>
    </location>
</feature>
<feature type="region of interest" description="Disordered" evidence="2">
    <location>
        <begin position="1"/>
        <end position="67"/>
    </location>
</feature>
<feature type="active site" evidence="1">
    <location>
        <position position="207"/>
    </location>
</feature>
<feature type="active site" evidence="1">
    <location>
        <position position="649"/>
    </location>
</feature>
<name>CAPP_BURVG</name>
<sequence>MKSSGSARTARRNAALPSTDAQTGALATVANGRAKPATKPKDSIRQTKRTTKAAGASKPAARTREDKDGPLFEDIRFLGRLLGDVVREQEGDTVFDVVETIRQTAVKFRREDDSQAAQTLEKKLRKLTPEQTVSVVRAFSYFSHLANIAEDRHHNRRRRIHALAGSAPQPGTVAYALEQLKTSGNASKRVLQRFFDDALIVPVLTAHPTEVQRKSILDAQHDIARLLAERDQPLTARERAYNESMLRARVTALWQTRMLRDARLTVGDEIENALSYYRTTFLDELPALYGDIEAALAEHGLPARVPAFFQMGSWIGGDRDGNPNVTAATLDEAINRQAAVILEHYLEQVHKLGAELSVSNLLVGANDAVKALAAASPDQSPHRVDEPYRRALIGIYTRLAASARVRLGEGTVPVRSAGRGAPPVRAVPYADSEAFVADLKVLTASLEEHHGASLAAPRLTPLMRAAEVFGFHLSSIDLRQSSDIHEAVVAELFARAGVHADYASLSEDDKLIALLAALADPRPLRSPYIEYSALAQSELGVFEKAREVRAQFGPRAVRNYIISHTETVSDLVEVLLLQKETGLLEGAFGAAHDSARNGLMVIPLFETIPDLRDAARIMREYFALPGIEALIAHQGAEQEVMLGYSDSNKDGGFLTSNWELYRAELALVDLFRDRKITLRLFHGRGGTVGRGGGPTYQAILSQPPGTVNGQIRLTEQGEVIASKFANPEIGRRNLETVVAATLEASLLPQSNAPAQLPAFEAAMQALSDAAMASYRALVYETPGFTDYFFAATPITEIAELNIGSRPASRKLQDPKNRRIEDLRAIPWGFSWGQCRLLLTGWYGFGSAVSAYLDGAPDAAARTKRVALLKKMNKTWPFFANLLSNMDMVLAKTDLAVASRYAQLVADRKLRKHVFERIVAEWERTAQALAEITGHEGRLATNPLLARSIKNRFPYLDPLNHLQVELIKRHRAGDTNARLRRGIHLTINGIAAGLRNTG</sequence>
<dbReference type="EC" id="4.1.1.31" evidence="1"/>
<dbReference type="EMBL" id="CP000614">
    <property type="protein sequence ID" value="ABO55508.1"/>
    <property type="molecule type" value="Genomic_DNA"/>
</dbReference>
<dbReference type="SMR" id="A4JGV5"/>
<dbReference type="KEGG" id="bvi:Bcep1808_2510"/>
<dbReference type="eggNOG" id="COG2352">
    <property type="taxonomic scope" value="Bacteria"/>
</dbReference>
<dbReference type="HOGENOM" id="CLU_006557_2_0_4"/>
<dbReference type="Proteomes" id="UP000002287">
    <property type="component" value="Chromosome 1"/>
</dbReference>
<dbReference type="GO" id="GO:0005829">
    <property type="term" value="C:cytosol"/>
    <property type="evidence" value="ECO:0007669"/>
    <property type="project" value="TreeGrafter"/>
</dbReference>
<dbReference type="GO" id="GO:0000287">
    <property type="term" value="F:magnesium ion binding"/>
    <property type="evidence" value="ECO:0007669"/>
    <property type="project" value="UniProtKB-UniRule"/>
</dbReference>
<dbReference type="GO" id="GO:0008964">
    <property type="term" value="F:phosphoenolpyruvate carboxylase activity"/>
    <property type="evidence" value="ECO:0007669"/>
    <property type="project" value="UniProtKB-UniRule"/>
</dbReference>
<dbReference type="GO" id="GO:0015977">
    <property type="term" value="P:carbon fixation"/>
    <property type="evidence" value="ECO:0007669"/>
    <property type="project" value="UniProtKB-UniRule"/>
</dbReference>
<dbReference type="GO" id="GO:0006107">
    <property type="term" value="P:oxaloacetate metabolic process"/>
    <property type="evidence" value="ECO:0007669"/>
    <property type="project" value="UniProtKB-UniRule"/>
</dbReference>
<dbReference type="GO" id="GO:0006099">
    <property type="term" value="P:tricarboxylic acid cycle"/>
    <property type="evidence" value="ECO:0007669"/>
    <property type="project" value="InterPro"/>
</dbReference>
<dbReference type="Gene3D" id="1.20.1440.90">
    <property type="entry name" value="Phosphoenolpyruvate/pyruvate domain"/>
    <property type="match status" value="1"/>
</dbReference>
<dbReference type="HAMAP" id="MF_00595">
    <property type="entry name" value="PEPcase_type1"/>
    <property type="match status" value="1"/>
</dbReference>
<dbReference type="InterPro" id="IPR021135">
    <property type="entry name" value="PEP_COase"/>
</dbReference>
<dbReference type="InterPro" id="IPR022805">
    <property type="entry name" value="PEP_COase_bac/pln-type"/>
</dbReference>
<dbReference type="InterPro" id="IPR018129">
    <property type="entry name" value="PEP_COase_Lys_AS"/>
</dbReference>
<dbReference type="InterPro" id="IPR033129">
    <property type="entry name" value="PEPCASE_His_AS"/>
</dbReference>
<dbReference type="InterPro" id="IPR015813">
    <property type="entry name" value="Pyrv/PenolPyrv_kinase-like_dom"/>
</dbReference>
<dbReference type="NCBIfam" id="NF000584">
    <property type="entry name" value="PRK00009.1"/>
    <property type="match status" value="1"/>
</dbReference>
<dbReference type="PANTHER" id="PTHR30523">
    <property type="entry name" value="PHOSPHOENOLPYRUVATE CARBOXYLASE"/>
    <property type="match status" value="1"/>
</dbReference>
<dbReference type="PANTHER" id="PTHR30523:SF6">
    <property type="entry name" value="PHOSPHOENOLPYRUVATE CARBOXYLASE"/>
    <property type="match status" value="1"/>
</dbReference>
<dbReference type="Pfam" id="PF00311">
    <property type="entry name" value="PEPcase"/>
    <property type="match status" value="1"/>
</dbReference>
<dbReference type="PRINTS" id="PR00150">
    <property type="entry name" value="PEPCARBXLASE"/>
</dbReference>
<dbReference type="SUPFAM" id="SSF51621">
    <property type="entry name" value="Phosphoenolpyruvate/pyruvate domain"/>
    <property type="match status" value="1"/>
</dbReference>
<dbReference type="PROSITE" id="PS00781">
    <property type="entry name" value="PEPCASE_1"/>
    <property type="match status" value="1"/>
</dbReference>
<dbReference type="PROSITE" id="PS00393">
    <property type="entry name" value="PEPCASE_2"/>
    <property type="match status" value="1"/>
</dbReference>
<keyword id="KW-0120">Carbon dioxide fixation</keyword>
<keyword id="KW-0456">Lyase</keyword>
<keyword id="KW-0460">Magnesium</keyword>
<gene>
    <name evidence="1" type="primary">ppc</name>
    <name type="ordered locus">Bcep1808_2510</name>
</gene>
<proteinExistence type="inferred from homology"/>
<comment type="function">
    <text evidence="1">Forms oxaloacetate, a four-carbon dicarboxylic acid source for the tricarboxylic acid cycle.</text>
</comment>
<comment type="catalytic activity">
    <reaction evidence="1">
        <text>oxaloacetate + phosphate = phosphoenolpyruvate + hydrogencarbonate</text>
        <dbReference type="Rhea" id="RHEA:28370"/>
        <dbReference type="ChEBI" id="CHEBI:16452"/>
        <dbReference type="ChEBI" id="CHEBI:17544"/>
        <dbReference type="ChEBI" id="CHEBI:43474"/>
        <dbReference type="ChEBI" id="CHEBI:58702"/>
        <dbReference type="EC" id="4.1.1.31"/>
    </reaction>
</comment>
<comment type="cofactor">
    <cofactor evidence="1">
        <name>Mg(2+)</name>
        <dbReference type="ChEBI" id="CHEBI:18420"/>
    </cofactor>
</comment>
<comment type="similarity">
    <text evidence="1">Belongs to the PEPCase type 1 family.</text>
</comment>
<organism>
    <name type="scientific">Burkholderia vietnamiensis (strain G4 / LMG 22486)</name>
    <name type="common">Burkholderia cepacia (strain R1808)</name>
    <dbReference type="NCBI Taxonomy" id="269482"/>
    <lineage>
        <taxon>Bacteria</taxon>
        <taxon>Pseudomonadati</taxon>
        <taxon>Pseudomonadota</taxon>
        <taxon>Betaproteobacteria</taxon>
        <taxon>Burkholderiales</taxon>
        <taxon>Burkholderiaceae</taxon>
        <taxon>Burkholderia</taxon>
        <taxon>Burkholderia cepacia complex</taxon>
    </lineage>
</organism>